<dbReference type="EC" id="6.3.3.3" evidence="1"/>
<dbReference type="EMBL" id="CP000356">
    <property type="protein sequence ID" value="ABF53187.1"/>
    <property type="molecule type" value="Genomic_DNA"/>
</dbReference>
<dbReference type="RefSeq" id="WP_011541767.1">
    <property type="nucleotide sequence ID" value="NC_008048.1"/>
</dbReference>
<dbReference type="SMR" id="Q1GT35"/>
<dbReference type="STRING" id="317655.Sala_1474"/>
<dbReference type="KEGG" id="sal:Sala_1474"/>
<dbReference type="eggNOG" id="COG0132">
    <property type="taxonomic scope" value="Bacteria"/>
</dbReference>
<dbReference type="HOGENOM" id="CLU_072551_2_0_5"/>
<dbReference type="OrthoDB" id="9802097at2"/>
<dbReference type="UniPathway" id="UPA00078">
    <property type="reaction ID" value="UER00161"/>
</dbReference>
<dbReference type="Proteomes" id="UP000006578">
    <property type="component" value="Chromosome"/>
</dbReference>
<dbReference type="GO" id="GO:0005829">
    <property type="term" value="C:cytosol"/>
    <property type="evidence" value="ECO:0007669"/>
    <property type="project" value="TreeGrafter"/>
</dbReference>
<dbReference type="GO" id="GO:0005524">
    <property type="term" value="F:ATP binding"/>
    <property type="evidence" value="ECO:0007669"/>
    <property type="project" value="UniProtKB-UniRule"/>
</dbReference>
<dbReference type="GO" id="GO:0004141">
    <property type="term" value="F:dethiobiotin synthase activity"/>
    <property type="evidence" value="ECO:0007669"/>
    <property type="project" value="UniProtKB-UniRule"/>
</dbReference>
<dbReference type="GO" id="GO:0000287">
    <property type="term" value="F:magnesium ion binding"/>
    <property type="evidence" value="ECO:0007669"/>
    <property type="project" value="UniProtKB-UniRule"/>
</dbReference>
<dbReference type="GO" id="GO:0009102">
    <property type="term" value="P:biotin biosynthetic process"/>
    <property type="evidence" value="ECO:0007669"/>
    <property type="project" value="UniProtKB-UniRule"/>
</dbReference>
<dbReference type="CDD" id="cd03109">
    <property type="entry name" value="DTBS"/>
    <property type="match status" value="1"/>
</dbReference>
<dbReference type="Gene3D" id="3.40.50.300">
    <property type="entry name" value="P-loop containing nucleotide triphosphate hydrolases"/>
    <property type="match status" value="1"/>
</dbReference>
<dbReference type="HAMAP" id="MF_00336">
    <property type="entry name" value="BioD"/>
    <property type="match status" value="1"/>
</dbReference>
<dbReference type="InterPro" id="IPR004472">
    <property type="entry name" value="DTB_synth_BioD"/>
</dbReference>
<dbReference type="InterPro" id="IPR027417">
    <property type="entry name" value="P-loop_NTPase"/>
</dbReference>
<dbReference type="NCBIfam" id="TIGR00347">
    <property type="entry name" value="bioD"/>
    <property type="match status" value="1"/>
</dbReference>
<dbReference type="PANTHER" id="PTHR43210:SF2">
    <property type="entry name" value="ATP-DEPENDENT DETHIOBIOTIN SYNTHETASE BIOD 2"/>
    <property type="match status" value="1"/>
</dbReference>
<dbReference type="PANTHER" id="PTHR43210">
    <property type="entry name" value="DETHIOBIOTIN SYNTHETASE"/>
    <property type="match status" value="1"/>
</dbReference>
<dbReference type="Pfam" id="PF13500">
    <property type="entry name" value="AAA_26"/>
    <property type="match status" value="1"/>
</dbReference>
<dbReference type="PIRSF" id="PIRSF006755">
    <property type="entry name" value="DTB_synth"/>
    <property type="match status" value="1"/>
</dbReference>
<dbReference type="SUPFAM" id="SSF52540">
    <property type="entry name" value="P-loop containing nucleoside triphosphate hydrolases"/>
    <property type="match status" value="1"/>
</dbReference>
<keyword id="KW-0067">ATP-binding</keyword>
<keyword id="KW-0093">Biotin biosynthesis</keyword>
<keyword id="KW-0963">Cytoplasm</keyword>
<keyword id="KW-0436">Ligase</keyword>
<keyword id="KW-0460">Magnesium</keyword>
<keyword id="KW-0479">Metal-binding</keyword>
<keyword id="KW-0547">Nucleotide-binding</keyword>
<keyword id="KW-1185">Reference proteome</keyword>
<name>BIOD_SPHAL</name>
<accession>Q1GT35</accession>
<protein>
    <recommendedName>
        <fullName evidence="1">ATP-dependent dethiobiotin synthetase BioD</fullName>
        <ecNumber evidence="1">6.3.3.3</ecNumber>
    </recommendedName>
    <alternativeName>
        <fullName evidence="1">DTB synthetase</fullName>
        <shortName evidence="1">DTBS</shortName>
    </alternativeName>
    <alternativeName>
        <fullName evidence="1">Dethiobiotin synthase</fullName>
    </alternativeName>
</protein>
<comment type="function">
    <text evidence="1">Catalyzes a mechanistically unusual reaction, the ATP-dependent insertion of CO2 between the N7 and N8 nitrogen atoms of 7,8-diaminopelargonic acid (DAPA, also called 7,8-diammoniononanoate) to form a ureido ring.</text>
</comment>
<comment type="catalytic activity">
    <reaction evidence="1">
        <text>(7R,8S)-7,8-diammoniononanoate + CO2 + ATP = (4R,5S)-dethiobiotin + ADP + phosphate + 3 H(+)</text>
        <dbReference type="Rhea" id="RHEA:15805"/>
        <dbReference type="ChEBI" id="CHEBI:15378"/>
        <dbReference type="ChEBI" id="CHEBI:16526"/>
        <dbReference type="ChEBI" id="CHEBI:30616"/>
        <dbReference type="ChEBI" id="CHEBI:43474"/>
        <dbReference type="ChEBI" id="CHEBI:149469"/>
        <dbReference type="ChEBI" id="CHEBI:149473"/>
        <dbReference type="ChEBI" id="CHEBI:456216"/>
        <dbReference type="EC" id="6.3.3.3"/>
    </reaction>
</comment>
<comment type="cofactor">
    <cofactor evidence="1">
        <name>Mg(2+)</name>
        <dbReference type="ChEBI" id="CHEBI:18420"/>
    </cofactor>
</comment>
<comment type="pathway">
    <text evidence="1">Cofactor biosynthesis; biotin biosynthesis; biotin from 7,8-diaminononanoate: step 1/2.</text>
</comment>
<comment type="subunit">
    <text evidence="1">Homodimer.</text>
</comment>
<comment type="subcellular location">
    <subcellularLocation>
        <location evidence="1">Cytoplasm</location>
    </subcellularLocation>
</comment>
<comment type="similarity">
    <text evidence="1">Belongs to the dethiobiotin synthetase family.</text>
</comment>
<organism>
    <name type="scientific">Sphingopyxis alaskensis (strain DSM 13593 / LMG 18877 / RB2256)</name>
    <name type="common">Sphingomonas alaskensis</name>
    <dbReference type="NCBI Taxonomy" id="317655"/>
    <lineage>
        <taxon>Bacteria</taxon>
        <taxon>Pseudomonadati</taxon>
        <taxon>Pseudomonadota</taxon>
        <taxon>Alphaproteobacteria</taxon>
        <taxon>Sphingomonadales</taxon>
        <taxon>Sphingomonadaceae</taxon>
        <taxon>Sphingopyxis</taxon>
    </lineage>
</organism>
<sequence>MTRFVVTGTDTGIGKTIFSASLARATGTPYWKPVQSGLEEETDSEIVARLAGVPVRPEAYRLVTPASPHIAAEIDGVAIDIERLTPPPGELIVEGAGGALVPVTRRTLYAELFARWQVPVIVCARTSLGTINHSLLTIEALKRRDVPIHGVVFIGDAVEDSEAIIADVSGVRRLGRLPVVAPLTSENLAAAFGANFDIADFR</sequence>
<evidence type="ECO:0000255" key="1">
    <source>
        <dbReference type="HAMAP-Rule" id="MF_00336"/>
    </source>
</evidence>
<proteinExistence type="inferred from homology"/>
<reference key="1">
    <citation type="journal article" date="2009" name="Proc. Natl. Acad. Sci. U.S.A.">
        <title>The genomic basis of trophic strategy in marine bacteria.</title>
        <authorList>
            <person name="Lauro F.M."/>
            <person name="McDougald D."/>
            <person name="Thomas T."/>
            <person name="Williams T.J."/>
            <person name="Egan S."/>
            <person name="Rice S."/>
            <person name="DeMaere M.Z."/>
            <person name="Ting L."/>
            <person name="Ertan H."/>
            <person name="Johnson J."/>
            <person name="Ferriera S."/>
            <person name="Lapidus A."/>
            <person name="Anderson I."/>
            <person name="Kyrpides N."/>
            <person name="Munk A.C."/>
            <person name="Detter C."/>
            <person name="Han C.S."/>
            <person name="Brown M.V."/>
            <person name="Robb F.T."/>
            <person name="Kjelleberg S."/>
            <person name="Cavicchioli R."/>
        </authorList>
    </citation>
    <scope>NUCLEOTIDE SEQUENCE [LARGE SCALE GENOMIC DNA]</scope>
    <source>
        <strain>DSM 13593 / LMG 18877 / RB2256</strain>
    </source>
</reference>
<feature type="chain" id="PRO_1000059711" description="ATP-dependent dethiobiotin synthetase BioD">
    <location>
        <begin position="1"/>
        <end position="202"/>
    </location>
</feature>
<feature type="active site" evidence="1">
    <location>
        <position position="32"/>
    </location>
</feature>
<feature type="binding site" evidence="1">
    <location>
        <begin position="12"/>
        <end position="17"/>
    </location>
    <ligand>
        <name>ATP</name>
        <dbReference type="ChEBI" id="CHEBI:30616"/>
    </ligand>
</feature>
<feature type="binding site" evidence="1">
    <location>
        <position position="16"/>
    </location>
    <ligand>
        <name>Mg(2+)</name>
        <dbReference type="ChEBI" id="CHEBI:18420"/>
    </ligand>
</feature>
<feature type="binding site" evidence="1">
    <location>
        <position position="36"/>
    </location>
    <ligand>
        <name>substrate</name>
    </ligand>
</feature>
<feature type="binding site" evidence="1">
    <location>
        <position position="43"/>
    </location>
    <ligand>
        <name>ATP</name>
        <dbReference type="ChEBI" id="CHEBI:30616"/>
    </ligand>
</feature>
<feature type="binding site" evidence="1">
    <location>
        <position position="43"/>
    </location>
    <ligand>
        <name>Mg(2+)</name>
        <dbReference type="ChEBI" id="CHEBI:18420"/>
    </ligand>
</feature>
<feature type="binding site" evidence="1">
    <location>
        <begin position="94"/>
        <end position="97"/>
    </location>
    <ligand>
        <name>ATP</name>
        <dbReference type="ChEBI" id="CHEBI:30616"/>
    </ligand>
</feature>
<feature type="binding site" evidence="1">
    <location>
        <position position="94"/>
    </location>
    <ligand>
        <name>Mg(2+)</name>
        <dbReference type="ChEBI" id="CHEBI:18420"/>
    </ligand>
</feature>
<feature type="binding site" evidence="1">
    <location>
        <begin position="178"/>
        <end position="180"/>
    </location>
    <ligand>
        <name>ATP</name>
        <dbReference type="ChEBI" id="CHEBI:30616"/>
    </ligand>
</feature>
<gene>
    <name evidence="1" type="primary">bioD</name>
    <name type="ordered locus">Sala_1474</name>
</gene>